<proteinExistence type="evidence at transcript level"/>
<reference key="1">
    <citation type="journal article" date="2010" name="Biochem. Biophys. Res. Commun.">
        <title>GPR155: Gene organization, multiple mRNA splice variants and expression in mouse central nervous system.</title>
        <authorList>
            <person name="Trifonov S."/>
            <person name="Houtani T."/>
            <person name="Shimizu J."/>
            <person name="Hamada S."/>
            <person name="Kase M."/>
            <person name="Maruyama M."/>
            <person name="Sugimoto T."/>
        </authorList>
    </citation>
    <scope>NUCLEOTIDE SEQUENCE [MRNA] (ISOFORMS 1; 2; 3; 4 AND 5)</scope>
    <scope>TISSUE SPECIFICITY</scope>
    <source>
        <strain>C57BL/6J</strain>
        <tissue>Brain</tissue>
    </source>
</reference>
<reference key="2">
    <citation type="journal article" date="2009" name="PLoS Biol.">
        <title>Lineage-specific biology revealed by a finished genome assembly of the mouse.</title>
        <authorList>
            <person name="Church D.M."/>
            <person name="Goodstadt L."/>
            <person name="Hillier L.W."/>
            <person name="Zody M.C."/>
            <person name="Goldstein S."/>
            <person name="She X."/>
            <person name="Bult C.J."/>
            <person name="Agarwala R."/>
            <person name="Cherry J.L."/>
            <person name="DiCuccio M."/>
            <person name="Hlavina W."/>
            <person name="Kapustin Y."/>
            <person name="Meric P."/>
            <person name="Maglott D."/>
            <person name="Birtle Z."/>
            <person name="Marques A.C."/>
            <person name="Graves T."/>
            <person name="Zhou S."/>
            <person name="Teague B."/>
            <person name="Potamousis K."/>
            <person name="Churas C."/>
            <person name="Place M."/>
            <person name="Herschleb J."/>
            <person name="Runnheim R."/>
            <person name="Forrest D."/>
            <person name="Amos-Landgraf J."/>
            <person name="Schwartz D.C."/>
            <person name="Cheng Z."/>
            <person name="Lindblad-Toh K."/>
            <person name="Eichler E.E."/>
            <person name="Ponting C.P."/>
        </authorList>
    </citation>
    <scope>NUCLEOTIDE SEQUENCE [LARGE SCALE GENOMIC DNA]</scope>
    <source>
        <strain>C57BL/6J</strain>
    </source>
</reference>
<reference key="3">
    <citation type="journal article" date="2004" name="Genome Res.">
        <title>The status, quality, and expansion of the NIH full-length cDNA project: the Mammalian Gene Collection (MGC).</title>
        <authorList>
            <consortium name="The MGC Project Team"/>
        </authorList>
    </citation>
    <scope>NUCLEOTIDE SEQUENCE [LARGE SCALE MRNA] (ISOFORM 3)</scope>
    <source>
        <strain>FVB/N</strain>
        <tissue>Salivary gland</tissue>
    </source>
</reference>
<reference key="4">
    <citation type="journal article" date="2003" name="Proc. Natl. Acad. Sci. U.S.A.">
        <title>The G protein-coupled receptor repertoires of human and mouse.</title>
        <authorList>
            <person name="Vassilatis D.K."/>
            <person name="Hohmann J.G."/>
            <person name="Zeng H."/>
            <person name="Li F."/>
            <person name="Ranchalis J.E."/>
            <person name="Mortrud M.T."/>
            <person name="Brown A."/>
            <person name="Rodriguez S.S."/>
            <person name="Weller J.R."/>
            <person name="Wright A.C."/>
            <person name="Bergmann J.E."/>
            <person name="Gaitanaris G.A."/>
        </authorList>
    </citation>
    <scope>NUCLEOTIDE SEQUENCE [MRNA] OF 492-677</scope>
</reference>
<feature type="chain" id="PRO_0000458850" description="Lysosomal cholesterol signaling protein">
    <location>
        <begin position="1"/>
        <end position="868"/>
    </location>
</feature>
<feature type="topological domain" description="Lumenal" evidence="1">
    <location>
        <begin position="1"/>
        <end position="36"/>
    </location>
</feature>
<feature type="transmembrane region" description="Helical; Name=1" evidence="1">
    <location>
        <begin position="37"/>
        <end position="57"/>
    </location>
</feature>
<feature type="topological domain" description="Cytoplasmic" evidence="1">
    <location>
        <begin position="58"/>
        <end position="77"/>
    </location>
</feature>
<feature type="transmembrane region" description="Helical; Name=2" evidence="1">
    <location>
        <begin position="78"/>
        <end position="98"/>
    </location>
</feature>
<feature type="topological domain" description="Lumenal" evidence="1">
    <location>
        <begin position="99"/>
        <end position="102"/>
    </location>
</feature>
<feature type="transmembrane region" description="Helical; Name=3" evidence="1">
    <location>
        <begin position="103"/>
        <end position="123"/>
    </location>
</feature>
<feature type="topological domain" description="Cytoplasmic" evidence="1">
    <location>
        <begin position="124"/>
        <end position="131"/>
    </location>
</feature>
<feature type="transmembrane region" description="Discontinuously helical; Name=4" evidence="1">
    <location>
        <begin position="132"/>
        <end position="152"/>
    </location>
</feature>
<feature type="topological domain" description="Lumenal" evidence="1">
    <location>
        <begin position="153"/>
        <end position="165"/>
    </location>
</feature>
<feature type="transmembrane region" description="Helical; Name=5" evidence="1">
    <location>
        <begin position="166"/>
        <end position="186"/>
    </location>
</feature>
<feature type="topological domain" description="Cytoplasmic" evidence="1">
    <location>
        <begin position="187"/>
        <end position="211"/>
    </location>
</feature>
<feature type="transmembrane region" description="Discontinuously helical; Name=6" evidence="1">
    <location>
        <begin position="212"/>
        <end position="232"/>
    </location>
</feature>
<feature type="topological domain" description="Lumenal" evidence="1">
    <location>
        <begin position="233"/>
        <end position="241"/>
    </location>
</feature>
<feature type="transmembrane region" description="Discontinuously helical; Name=7" evidence="1">
    <location>
        <begin position="242"/>
        <end position="262"/>
    </location>
</feature>
<feature type="topological domain" description="Cytoplasmic" evidence="1">
    <location>
        <begin position="263"/>
        <end position="271"/>
    </location>
</feature>
<feature type="transmembrane region" description="Helical; Name=8" evidence="1">
    <location>
        <begin position="272"/>
        <end position="292"/>
    </location>
</feature>
<feature type="topological domain" description="Lumenal" evidence="1">
    <location>
        <begin position="293"/>
        <end position="313"/>
    </location>
</feature>
<feature type="transmembrane region" description="Discontinuously helical; Name=9" evidence="1">
    <location>
        <begin position="314"/>
        <end position="334"/>
    </location>
</feature>
<feature type="topological domain" description="Cytoplasmic" evidence="1">
    <location>
        <begin position="335"/>
        <end position="344"/>
    </location>
</feature>
<feature type="transmembrane region" description="Helical; Name=10" evidence="1">
    <location>
        <begin position="345"/>
        <end position="365"/>
    </location>
</feature>
<feature type="topological domain" description="Lumenal" evidence="1">
    <location>
        <begin position="366"/>
        <end position="379"/>
    </location>
</feature>
<feature type="transmembrane region" description="Helical; Name=11" evidence="1">
    <location>
        <begin position="380"/>
        <end position="400"/>
    </location>
</feature>
<feature type="topological domain" description="Cytoplasmic" evidence="1">
    <location>
        <begin position="401"/>
        <end position="412"/>
    </location>
</feature>
<feature type="transmembrane region" description="Helical; Name=12" evidence="1">
    <location>
        <begin position="413"/>
        <end position="433"/>
    </location>
</feature>
<feature type="topological domain" description="Lumenal" evidence="1">
    <location>
        <begin position="434"/>
        <end position="436"/>
    </location>
</feature>
<feature type="transmembrane region" description="Helical; Name=13" evidence="1">
    <location>
        <begin position="437"/>
        <end position="457"/>
    </location>
</feature>
<feature type="topological domain" description="Cytoplasmic" evidence="1">
    <location>
        <begin position="458"/>
        <end position="478"/>
    </location>
</feature>
<feature type="transmembrane region" description="Helical; Name=14" evidence="1">
    <location>
        <begin position="479"/>
        <end position="499"/>
    </location>
</feature>
<feature type="topological domain" description="Lumenal" evidence="1">
    <location>
        <begin position="500"/>
        <end position="518"/>
    </location>
</feature>
<feature type="transmembrane region" description="Helical; Name=15" evidence="1">
    <location>
        <begin position="519"/>
        <end position="539"/>
    </location>
</feature>
<feature type="topological domain" description="Cytoplasmic" evidence="1">
    <location>
        <begin position="540"/>
        <end position="658"/>
    </location>
</feature>
<feature type="transmembrane region" description="Helical; Name=16" evidence="1">
    <location>
        <begin position="659"/>
        <end position="679"/>
    </location>
</feature>
<feature type="topological domain" description="Lumenal" evidence="1">
    <location>
        <begin position="680"/>
        <end position="689"/>
    </location>
</feature>
<feature type="transmembrane region" description="Helical; Name=17" evidence="1">
    <location>
        <begin position="690"/>
        <end position="710"/>
    </location>
</feature>
<feature type="topological domain" description="Cytoplasmic" evidence="1">
    <location>
        <begin position="711"/>
        <end position="868"/>
    </location>
</feature>
<feature type="domain" description="DEP" evidence="3">
    <location>
        <begin position="755"/>
        <end position="833"/>
    </location>
</feature>
<feature type="region of interest" description="PIN-like transporter" evidence="1">
    <location>
        <begin position="1"/>
        <end position="368"/>
    </location>
</feature>
<feature type="region of interest" description="GPCR" evidence="1">
    <location>
        <begin position="378"/>
        <end position="715"/>
    </location>
</feature>
<feature type="region of interest" description="Disordered" evidence="4">
    <location>
        <begin position="550"/>
        <end position="582"/>
    </location>
</feature>
<feature type="region of interest" description="Disordered" evidence="4">
    <location>
        <begin position="836"/>
        <end position="868"/>
    </location>
</feature>
<feature type="compositionally biased region" description="Basic and acidic residues" evidence="4">
    <location>
        <begin position="844"/>
        <end position="857"/>
    </location>
</feature>
<feature type="binding site" evidence="1">
    <location>
        <position position="41"/>
    </location>
    <ligand>
        <name>cholesterol</name>
        <dbReference type="ChEBI" id="CHEBI:16113"/>
    </ligand>
</feature>
<feature type="binding site" evidence="1">
    <location>
        <position position="55"/>
    </location>
    <ligand>
        <name>cholesterol</name>
        <dbReference type="ChEBI" id="CHEBI:16113"/>
    </ligand>
</feature>
<feature type="binding site" evidence="1">
    <location>
        <position position="264"/>
    </location>
    <ligand>
        <name>cholesterol</name>
        <dbReference type="ChEBI" id="CHEBI:16113"/>
    </ligand>
</feature>
<feature type="binding site" evidence="1">
    <location>
        <position position="265"/>
    </location>
    <ligand>
        <name>cholesterol</name>
        <dbReference type="ChEBI" id="CHEBI:16113"/>
    </ligand>
</feature>
<feature type="binding site" evidence="1">
    <location>
        <position position="266"/>
    </location>
    <ligand>
        <name>cholesterol</name>
        <dbReference type="ChEBI" id="CHEBI:16113"/>
    </ligand>
</feature>
<feature type="binding site" evidence="1">
    <location>
        <position position="655"/>
    </location>
    <ligand>
        <name>cholesterol</name>
        <dbReference type="ChEBI" id="CHEBI:16113"/>
    </ligand>
</feature>
<feature type="glycosylation site" description="N-linked (GlcNAc...) asparagine" evidence="2">
    <location>
        <position position="9"/>
    </location>
</feature>
<feature type="glycosylation site" description="N-linked (GlcNAc...) asparagine" evidence="2">
    <location>
        <position position="17"/>
    </location>
</feature>
<feature type="glycosylation site" description="N-linked (GlcNAc...) asparagine" evidence="2">
    <location>
        <position position="27"/>
    </location>
</feature>
<feature type="glycosylation site" description="N-linked (GlcNAc...) asparagine" evidence="2">
    <location>
        <position position="307"/>
    </location>
</feature>
<feature type="glycosylation site" description="N-linked (GlcNAc...) asparagine" evidence="2">
    <location>
        <position position="379"/>
    </location>
</feature>
<feature type="splice variant" id="VSP_061976" description="In isoform 2.">
    <original>LIWSLSILLLSKKYKQLPHMLTANLLIAQ</original>
    <variation>L</variation>
    <location>
        <begin position="392"/>
        <end position="420"/>
    </location>
</feature>
<feature type="splice variant" id="VSP_061977" description="In isoform 5.">
    <original>GFISFGIFGLDKHL</original>
    <variation>VFIYGEWRGLCFLG</variation>
    <location>
        <begin position="702"/>
        <end position="715"/>
    </location>
</feature>
<feature type="splice variant" id="VSP_061978" description="In isoform 3.">
    <original>GFISF</original>
    <variation>VGAAY</variation>
    <location>
        <begin position="702"/>
        <end position="706"/>
    </location>
</feature>
<feature type="splice variant" id="VSP_061979" description="In isoform 3.">
    <location>
        <begin position="707"/>
        <end position="868"/>
    </location>
</feature>
<feature type="splice variant" id="VSP_061980" description="In isoform 5.">
    <location>
        <begin position="716"/>
        <end position="868"/>
    </location>
</feature>
<feature type="splice variant" id="VSP_061981" description="In isoform 4.">
    <original>RCGAKTSAGTFCGCD</original>
    <variation>SADARITEHMAESFL</variation>
    <location>
        <begin position="769"/>
        <end position="783"/>
    </location>
</feature>
<feature type="splice variant" id="VSP_061982" description="In isoform 4.">
    <location>
        <begin position="784"/>
        <end position="868"/>
    </location>
</feature>
<protein>
    <recommendedName>
        <fullName evidence="1">Lysosomal cholesterol signaling protein</fullName>
        <shortName evidence="1">LYCHOS</shortName>
    </recommendedName>
</protein>
<name>LYCHS_MOUSE</name>
<accession>A2AWR3</accession>
<accession>A2AWR2</accession>
<accession>D7RXL9</accession>
<accession>D7RXM0</accession>
<accession>Q14BN5</accession>
<accession>Q80UC0</accession>
<accession>Q8R0W2</accession>
<organism>
    <name type="scientific">Mus musculus</name>
    <name type="common">Mouse</name>
    <dbReference type="NCBI Taxonomy" id="10090"/>
    <lineage>
        <taxon>Eukaryota</taxon>
        <taxon>Metazoa</taxon>
        <taxon>Chordata</taxon>
        <taxon>Craniata</taxon>
        <taxon>Vertebrata</taxon>
        <taxon>Euteleostomi</taxon>
        <taxon>Mammalia</taxon>
        <taxon>Eutheria</taxon>
        <taxon>Euarchontoglires</taxon>
        <taxon>Glires</taxon>
        <taxon>Rodentia</taxon>
        <taxon>Myomorpha</taxon>
        <taxon>Muroidea</taxon>
        <taxon>Muridae</taxon>
        <taxon>Murinae</taxon>
        <taxon>Mus</taxon>
        <taxon>Mus</taxon>
    </lineage>
</organism>
<evidence type="ECO:0000250" key="1">
    <source>
        <dbReference type="UniProtKB" id="Q7Z3F1"/>
    </source>
</evidence>
<evidence type="ECO:0000255" key="2"/>
<evidence type="ECO:0000255" key="3">
    <source>
        <dbReference type="PROSITE-ProRule" id="PRU00066"/>
    </source>
</evidence>
<evidence type="ECO:0000256" key="4">
    <source>
        <dbReference type="SAM" id="MobiDB-lite"/>
    </source>
</evidence>
<evidence type="ECO:0000269" key="5">
    <source>
    </source>
</evidence>
<evidence type="ECO:0000303" key="6">
    <source>
    </source>
</evidence>
<evidence type="ECO:0000312" key="7">
    <source>
        <dbReference type="MGI" id="MGI:1915776"/>
    </source>
</evidence>
<keyword id="KW-0025">Alternative splicing</keyword>
<keyword id="KW-0325">Glycoprotein</keyword>
<keyword id="KW-0446">Lipid-binding</keyword>
<keyword id="KW-0458">Lysosome</keyword>
<keyword id="KW-0472">Membrane</keyword>
<keyword id="KW-1185">Reference proteome</keyword>
<keyword id="KW-0812">Transmembrane</keyword>
<keyword id="KW-1133">Transmembrane helix</keyword>
<gene>
    <name evidence="7" type="primary">Gpr155</name>
</gene>
<sequence>MDSYFSAKNSTLAGDMNATWPASHGFNATGDPPSMSITRLFPALLECFGIVLCGYIAGRANIITSTQAKGLGNFVSRFALPALLFKNMVVLNFSNVDWAFLYSVLIGKASVFFIVCVLTLLVASPESRFSKAGLFPIFATQSNDFALGYPIVEALYQSTYPEYLQYIYLVAPISLMMLNPIGFIFCEIQKSKDTQNASQNKAKIVGLGFLRVLQNPIVFMVFVGIAFNFILDKKIPVYMENFLDGLANSFSGSALFYLGLTMVGKIRRLKKSAFVVLTLLITAKLLVLPLLCREMVELLDKGDSVVNHTSLSNYAFLYGVFPVAPGVAIFATQFNMEVEIITSGMVISTFVSAPIMYVSAWLLTFPTMDAKPLAYAIQNVSFDISIISLVSLIWSLSILLLSKKYKQLPHMLTANLLIAQTIVCAGMMIWNFVKEKNFVGQILVFVLLYSSLYSTYLWTGLLAVSLFLLKKRESVQLPVGIIIISGWGIPALLVGVLLITGKHNGDSIDSAFFYGKEQMITTAVTLFCSILIAGVSLMCMNRTTQAGHYEGFGQSQNHKPVEPGSTAFEENPAPTNEPELFPSSIPETSCCSCSLGNGELRCPSIEPVTNSSASGPMPSSFEKTDHCVSRCDSQSCILAQEEEQYLQSGDPQLTRHVLLCLLLIIGLFANLSSCLWWLFNHETGRLYVELQFFCAVFNFGQGFISFGIFGLDKHLIILPFKRRLEFLWNNKEAAADRESPVSEEIKMTCQQFVHYHRDLCIRNIVRERRCGAKTSAGTFCGCDLVNWLIEVGLASDRGEAVIYGDRLVQGGVIQHITNEYEFRDEYLFYRFLQKSPEQSPPARTLRDHQEESYKEIGHSSPPSVSPKT</sequence>
<dbReference type="EMBL" id="HM161763">
    <property type="protein sequence ID" value="ADI43225.1"/>
    <property type="molecule type" value="mRNA"/>
</dbReference>
<dbReference type="EMBL" id="HM161764">
    <property type="protein sequence ID" value="ADI43226.1"/>
    <property type="molecule type" value="mRNA"/>
</dbReference>
<dbReference type="EMBL" id="HM161765">
    <property type="protein sequence ID" value="ADI43227.1"/>
    <property type="molecule type" value="mRNA"/>
</dbReference>
<dbReference type="EMBL" id="HM161766">
    <property type="protein sequence ID" value="ADI43228.1"/>
    <property type="molecule type" value="mRNA"/>
</dbReference>
<dbReference type="EMBL" id="KF358283">
    <property type="protein sequence ID" value="AGY49280.1"/>
    <property type="molecule type" value="mRNA"/>
</dbReference>
<dbReference type="EMBL" id="BC026382">
    <property type="protein sequence ID" value="AAH26382.1"/>
    <property type="molecule type" value="mRNA"/>
</dbReference>
<dbReference type="EMBL" id="BC115698">
    <property type="protein sequence ID" value="AAI15699.1"/>
    <property type="molecule type" value="mRNA"/>
</dbReference>
<dbReference type="EMBL" id="AY255560">
    <property type="protein sequence ID" value="AAO85072.1"/>
    <property type="molecule type" value="mRNA"/>
</dbReference>
<dbReference type="CCDS" id="CCDS50606.1">
    <molecule id="A2AWR3-1"/>
</dbReference>
<dbReference type="CCDS" id="CCDS71075.1">
    <molecule id="A2AWR3-2"/>
</dbReference>
<dbReference type="RefSeq" id="NP_001177226.1">
    <molecule id="A2AWR3-1"/>
    <property type="nucleotide sequence ID" value="NM_001190297.2"/>
</dbReference>
<dbReference type="RefSeq" id="NP_001263372.1">
    <molecule id="A2AWR3-4"/>
    <property type="nucleotide sequence ID" value="NM_001276443.1"/>
</dbReference>
<dbReference type="RefSeq" id="NP_001263373.1">
    <molecule id="A2AWR3-2"/>
    <property type="nucleotide sequence ID" value="NM_001276444.1"/>
</dbReference>
<dbReference type="RefSeq" id="XP_006500169.1">
    <molecule id="A2AWR3-1"/>
    <property type="nucleotide sequence ID" value="XM_006500106.3"/>
</dbReference>
<dbReference type="SMR" id="A2AWR3"/>
<dbReference type="FunCoup" id="A2AWR3">
    <property type="interactions" value="623"/>
</dbReference>
<dbReference type="STRING" id="10090.ENSMUSP00000075788"/>
<dbReference type="GlyGen" id="A2AWR3">
    <property type="glycosylation" value="9 sites"/>
</dbReference>
<dbReference type="iPTMnet" id="A2AWR3"/>
<dbReference type="PhosphoSitePlus" id="A2AWR3"/>
<dbReference type="PaxDb" id="10090-ENSMUSP00000075788"/>
<dbReference type="ProteomicsDB" id="332649"/>
<dbReference type="ProteomicsDB" id="336645"/>
<dbReference type="Antibodypedia" id="50637">
    <property type="antibodies" value="154 antibodies from 13 providers"/>
</dbReference>
<dbReference type="Ensembl" id="ENSMUST00000076463.12">
    <molecule id="A2AWR3-1"/>
    <property type="protein sequence ID" value="ENSMUSP00000075788.6"/>
    <property type="gene ID" value="ENSMUSG00000041762.17"/>
</dbReference>
<dbReference type="Ensembl" id="ENSMUST00000112043.8">
    <molecule id="A2AWR3-1"/>
    <property type="protein sequence ID" value="ENSMUSP00000107674.2"/>
    <property type="gene ID" value="ENSMUSG00000041762.17"/>
</dbReference>
<dbReference type="Ensembl" id="ENSMUST00000112044.8">
    <molecule id="A2AWR3-2"/>
    <property type="protein sequence ID" value="ENSMUSP00000107675.2"/>
    <property type="gene ID" value="ENSMUSG00000041762.17"/>
</dbReference>
<dbReference type="GeneID" id="68526"/>
<dbReference type="KEGG" id="mmu:68526"/>
<dbReference type="UCSC" id="uc008kco.3">
    <molecule id="A2AWR3-1"/>
    <property type="organism name" value="mouse"/>
</dbReference>
<dbReference type="AGR" id="MGI:1915776"/>
<dbReference type="CTD" id="151556"/>
<dbReference type="MGI" id="MGI:1915776">
    <property type="gene designation" value="Gpr155"/>
</dbReference>
<dbReference type="VEuPathDB" id="HostDB:ENSMUSG00000041762"/>
<dbReference type="eggNOG" id="ENOG502QQ69">
    <property type="taxonomic scope" value="Eukaryota"/>
</dbReference>
<dbReference type="GeneTree" id="ENSGT00390000004153"/>
<dbReference type="HOGENOM" id="CLU_018490_0_0_1"/>
<dbReference type="OMA" id="RISMCRR"/>
<dbReference type="OrthoDB" id="2133778at2759"/>
<dbReference type="TreeFam" id="TF324034"/>
<dbReference type="BioGRID-ORCS" id="68526">
    <property type="hits" value="0 hits in 76 CRISPR screens"/>
</dbReference>
<dbReference type="ChiTaRS" id="Gpr155">
    <property type="organism name" value="mouse"/>
</dbReference>
<dbReference type="PRO" id="PR:A2AWR3"/>
<dbReference type="Proteomes" id="UP000000589">
    <property type="component" value="Chromosome 2"/>
</dbReference>
<dbReference type="RNAct" id="A2AWR3">
    <property type="molecule type" value="protein"/>
</dbReference>
<dbReference type="Bgee" id="ENSMUSG00000041762">
    <property type="expression patterns" value="Expressed in olfactory epithelium and 232 other cell types or tissues"/>
</dbReference>
<dbReference type="ExpressionAtlas" id="A2AWR3">
    <property type="expression patterns" value="baseline and differential"/>
</dbReference>
<dbReference type="GO" id="GO:0005765">
    <property type="term" value="C:lysosomal membrane"/>
    <property type="evidence" value="ECO:0000250"/>
    <property type="project" value="UniProtKB"/>
</dbReference>
<dbReference type="GO" id="GO:0015485">
    <property type="term" value="F:cholesterol binding"/>
    <property type="evidence" value="ECO:0000250"/>
    <property type="project" value="UniProtKB"/>
</dbReference>
<dbReference type="GO" id="GO:0034198">
    <property type="term" value="P:cellular response to amino acid starvation"/>
    <property type="evidence" value="ECO:0000250"/>
    <property type="project" value="UniProtKB"/>
</dbReference>
<dbReference type="GO" id="GO:0071397">
    <property type="term" value="P:cellular response to cholesterol"/>
    <property type="evidence" value="ECO:0000250"/>
    <property type="project" value="UniProtKB"/>
</dbReference>
<dbReference type="GO" id="GO:0050890">
    <property type="term" value="P:cognition"/>
    <property type="evidence" value="ECO:0007669"/>
    <property type="project" value="Ensembl"/>
</dbReference>
<dbReference type="GO" id="GO:0035556">
    <property type="term" value="P:intracellular signal transduction"/>
    <property type="evidence" value="ECO:0007669"/>
    <property type="project" value="InterPro"/>
</dbReference>
<dbReference type="GO" id="GO:1904263">
    <property type="term" value="P:positive regulation of TORC1 signaling"/>
    <property type="evidence" value="ECO:0000250"/>
    <property type="project" value="UniProtKB"/>
</dbReference>
<dbReference type="GO" id="GO:0055085">
    <property type="term" value="P:transmembrane transport"/>
    <property type="evidence" value="ECO:0007669"/>
    <property type="project" value="InterPro"/>
</dbReference>
<dbReference type="CDD" id="cd04443">
    <property type="entry name" value="DEP_GPR155"/>
    <property type="match status" value="1"/>
</dbReference>
<dbReference type="FunFam" id="1.10.10.10:FF:000697">
    <property type="entry name" value="G protein-coupled receptor 155"/>
    <property type="match status" value="1"/>
</dbReference>
<dbReference type="FunFam" id="1.20.1070.10:FF:000298">
    <property type="entry name" value="Integral membrane protein GPR155"/>
    <property type="match status" value="1"/>
</dbReference>
<dbReference type="Gene3D" id="1.20.1070.10">
    <property type="entry name" value="Rhodopsin 7-helix transmembrane proteins"/>
    <property type="match status" value="1"/>
</dbReference>
<dbReference type="Gene3D" id="1.10.10.10">
    <property type="entry name" value="Winged helix-like DNA-binding domain superfamily/Winged helix DNA-binding domain"/>
    <property type="match status" value="1"/>
</dbReference>
<dbReference type="InterPro" id="IPR000591">
    <property type="entry name" value="DEP_dom"/>
</dbReference>
<dbReference type="InterPro" id="IPR037368">
    <property type="entry name" value="GPR155_DEP"/>
</dbReference>
<dbReference type="InterPro" id="IPR004776">
    <property type="entry name" value="Mem_transp_PIN-like"/>
</dbReference>
<dbReference type="InterPro" id="IPR051832">
    <property type="entry name" value="mTOR-Rac_regulators"/>
</dbReference>
<dbReference type="InterPro" id="IPR036388">
    <property type="entry name" value="WH-like_DNA-bd_sf"/>
</dbReference>
<dbReference type="InterPro" id="IPR036390">
    <property type="entry name" value="WH_DNA-bd_sf"/>
</dbReference>
<dbReference type="PANTHER" id="PTHR22829">
    <property type="entry name" value="DEP DOMAIN PROTEIN"/>
    <property type="match status" value="1"/>
</dbReference>
<dbReference type="PANTHER" id="PTHR22829:SF5">
    <property type="entry name" value="INTEGRAL MEMBRANE PROTEIN GPR155"/>
    <property type="match status" value="1"/>
</dbReference>
<dbReference type="Pfam" id="PF00610">
    <property type="entry name" value="DEP"/>
    <property type="match status" value="1"/>
</dbReference>
<dbReference type="Pfam" id="PF03547">
    <property type="entry name" value="Mem_trans"/>
    <property type="match status" value="1"/>
</dbReference>
<dbReference type="SMART" id="SM00049">
    <property type="entry name" value="DEP"/>
    <property type="match status" value="1"/>
</dbReference>
<dbReference type="SUPFAM" id="SSF46785">
    <property type="entry name" value="Winged helix' DNA-binding domain"/>
    <property type="match status" value="1"/>
</dbReference>
<dbReference type="PROSITE" id="PS50186">
    <property type="entry name" value="DEP"/>
    <property type="match status" value="1"/>
</dbReference>
<comment type="function">
    <text evidence="1">Cholesterol-binding protein that acts as a regulator of mTORC1 signaling pathway (By similarity). Acts as a sensor of cholesterol to signal cholesterol sufficiency to mTORC1: in presence of cholesterol, binds cholesterol, leading to disruption of the interaction between the GATOR1 and KICSTOR complexes and promotion of mTORC1 signaling (By similarity). Upon cholesterol starvation, GPR155/LYCHOS is unable to perturb the association between GATOR1 and KICSTOR, leading to mTORC1 signaling inhibition (By similarity). Binds indole-3-acetic acid and may play a role in tryptophan metabolism (By similarity).</text>
</comment>
<comment type="subunit">
    <text evidence="1">Homodimer; via the transporter region and DEP domain (By similarity). Interacts with the GATOR1 complex; preventing interaction between GATOR1 and KICSTOR; interaction is disrupted upon cholesterol starvation (By similarity).</text>
</comment>
<comment type="subcellular location">
    <subcellularLocation>
        <location evidence="1">Lysosome membrane</location>
        <topology evidence="1">Multi-pass membrane protein</topology>
    </subcellularLocation>
</comment>
<comment type="alternative products">
    <event type="alternative splicing"/>
    <isoform>
        <id>A2AWR3-1</id>
        <name>1</name>
        <name evidence="6">Variant 1</name>
        <sequence type="displayed"/>
    </isoform>
    <isoform>
        <id>A2AWR3-2</id>
        <name>2</name>
        <name evidence="6">Variant 5</name>
        <sequence type="described" ref="VSP_061976"/>
    </isoform>
    <isoform>
        <id>A2AWR3-3</id>
        <name>3</name>
        <name evidence="6">Variant 3</name>
        <sequence type="described" ref="VSP_061978 VSP_061979"/>
    </isoform>
    <isoform>
        <id>A2AWR3-4</id>
        <name>4</name>
        <name evidence="6">Variant 2</name>
        <sequence type="described" ref="VSP_061981 VSP_061982"/>
    </isoform>
    <isoform>
        <id>A2AWR3-5</id>
        <name>5</name>
        <name evidence="6">Variant 4</name>
        <sequence type="described" ref="VSP_061977 VSP_061980"/>
    </isoform>
</comment>
<comment type="tissue specificity">
    <text evidence="5">Widely expressed in adult tissues and during development (PubMed:20537985). In brain, widely distributed in forebrain regions, while it shows a more restricted distribution in the midbrain and hindbrain regions (PubMed:20537985). Expressed at highest level in the lateral part of striatum and hippocampus (PubMed:20537985).</text>
</comment>
<comment type="domain">
    <text evidence="1">Cholesterol binds at the interface between the PIN-like transporter region and the GPCR domain; these two regions likely coordinate to sense cholesterol and regulate mTORC1 activation.</text>
</comment>